<name>JTB_HUMAN</name>
<gene>
    <name type="primary">JTB</name>
    <name type="ORF">HSPC222</name>
</gene>
<protein>
    <recommendedName>
        <fullName>Protein JTB</fullName>
    </recommendedName>
    <alternativeName>
        <fullName>Jumping translocation breakpoint protein</fullName>
    </alternativeName>
    <alternativeName>
        <fullName>Prostate androgen-regulated protein</fullName>
        <shortName>PAR protein</shortName>
    </alternativeName>
</protein>
<proteinExistence type="evidence at protein level"/>
<keyword id="KW-0002">3D-structure</keyword>
<keyword id="KW-0025">Alternative splicing</keyword>
<keyword id="KW-0053">Apoptosis</keyword>
<keyword id="KW-0131">Cell cycle</keyword>
<keyword id="KW-0132">Cell division</keyword>
<keyword id="KW-0963">Cytoplasm</keyword>
<keyword id="KW-0206">Cytoskeleton</keyword>
<keyword id="KW-0472">Membrane</keyword>
<keyword id="KW-0496">Mitochondrion</keyword>
<keyword id="KW-0498">Mitosis</keyword>
<keyword id="KW-1267">Proteomics identification</keyword>
<keyword id="KW-1185">Reference proteome</keyword>
<keyword id="KW-0732">Signal</keyword>
<keyword id="KW-0812">Transmembrane</keyword>
<keyword id="KW-1133">Transmembrane helix</keyword>
<evidence type="ECO:0000250" key="1"/>
<evidence type="ECO:0000255" key="2"/>
<evidence type="ECO:0000269" key="3">
    <source>
    </source>
</evidence>
<evidence type="ECO:0000269" key="4">
    <source>
    </source>
</evidence>
<evidence type="ECO:0000269" key="5">
    <source>
    </source>
</evidence>
<evidence type="ECO:0000269" key="6">
    <source>
    </source>
</evidence>
<evidence type="ECO:0000303" key="7">
    <source>
    </source>
</evidence>
<evidence type="ECO:0000303" key="8">
    <source>
    </source>
</evidence>
<evidence type="ECO:0000305" key="9"/>
<evidence type="ECO:0007829" key="10">
    <source>
        <dbReference type="PDB" id="2KJX"/>
    </source>
</evidence>
<accession>O76095</accession>
<accession>O95442</accession>
<accession>Q6IB19</accession>
<accession>Q9P0Q4</accession>
<dbReference type="EMBL" id="AB016492">
    <property type="protein sequence ID" value="BAA33735.1"/>
    <property type="molecule type" value="Genomic_DNA"/>
</dbReference>
<dbReference type="EMBL" id="AB016488">
    <property type="protein sequence ID" value="BAA33731.1"/>
    <property type="molecule type" value="mRNA"/>
</dbReference>
<dbReference type="EMBL" id="AB016493">
    <property type="protein sequence ID" value="BAA33736.1"/>
    <property type="molecule type" value="Genomic_DNA"/>
</dbReference>
<dbReference type="EMBL" id="AF115850">
    <property type="protein sequence ID" value="AAD09822.2"/>
    <property type="molecule type" value="mRNA"/>
</dbReference>
<dbReference type="EMBL" id="AF131797">
    <property type="protein sequence ID" value="AAD20045.1"/>
    <property type="molecule type" value="mRNA"/>
</dbReference>
<dbReference type="EMBL" id="AF151056">
    <property type="protein sequence ID" value="AAF36142.1"/>
    <property type="molecule type" value="mRNA"/>
</dbReference>
<dbReference type="EMBL" id="BT007285">
    <property type="protein sequence ID" value="AAP35949.1"/>
    <property type="molecule type" value="mRNA"/>
</dbReference>
<dbReference type="EMBL" id="CR456985">
    <property type="protein sequence ID" value="CAG33266.1"/>
    <property type="molecule type" value="mRNA"/>
</dbReference>
<dbReference type="EMBL" id="AK312106">
    <property type="protein sequence ID" value="BAG35042.1"/>
    <property type="molecule type" value="mRNA"/>
</dbReference>
<dbReference type="EMBL" id="AL358472">
    <property type="status" value="NOT_ANNOTATED_CDS"/>
    <property type="molecule type" value="Genomic_DNA"/>
</dbReference>
<dbReference type="EMBL" id="CH471121">
    <property type="protein sequence ID" value="EAW53241.1"/>
    <property type="molecule type" value="Genomic_DNA"/>
</dbReference>
<dbReference type="EMBL" id="CH471121">
    <property type="protein sequence ID" value="EAW53242.1"/>
    <property type="molecule type" value="Genomic_DNA"/>
</dbReference>
<dbReference type="EMBL" id="CH471121">
    <property type="protein sequence ID" value="EAW53244.1"/>
    <property type="molecule type" value="Genomic_DNA"/>
</dbReference>
<dbReference type="EMBL" id="BC000499">
    <property type="protein sequence ID" value="AAH00499.1"/>
    <property type="molecule type" value="mRNA"/>
</dbReference>
<dbReference type="EMBL" id="BC000996">
    <property type="protein sequence ID" value="AAH00996.1"/>
    <property type="molecule type" value="mRNA"/>
</dbReference>
<dbReference type="EMBL" id="BC001363">
    <property type="protein sequence ID" value="AAH01363.1"/>
    <property type="molecule type" value="mRNA"/>
</dbReference>
<dbReference type="EMBL" id="BC001667">
    <property type="protein sequence ID" value="AAH01667.1"/>
    <property type="molecule type" value="mRNA"/>
</dbReference>
<dbReference type="EMBL" id="BC004239">
    <property type="protein sequence ID" value="AAH04239.1"/>
    <property type="molecule type" value="mRNA"/>
</dbReference>
<dbReference type="EMBL" id="BC019277">
    <property type="protein sequence ID" value="AAH19277.1"/>
    <property type="molecule type" value="mRNA"/>
</dbReference>
<dbReference type="CCDS" id="CCDS1057.1">
    <molecule id="O76095-1"/>
</dbReference>
<dbReference type="RefSeq" id="NP_006685.1">
    <molecule id="O76095-1"/>
    <property type="nucleotide sequence ID" value="NM_006694.4"/>
</dbReference>
<dbReference type="PDB" id="2KJX">
    <property type="method" value="NMR"/>
    <property type="chains" value="A=47-104"/>
</dbReference>
<dbReference type="PDBsum" id="2KJX"/>
<dbReference type="SMR" id="O76095"/>
<dbReference type="BioGRID" id="116105">
    <property type="interactions" value="44"/>
</dbReference>
<dbReference type="FunCoup" id="O76095">
    <property type="interactions" value="368"/>
</dbReference>
<dbReference type="IntAct" id="O76095">
    <property type="interactions" value="32"/>
</dbReference>
<dbReference type="MINT" id="O76095"/>
<dbReference type="STRING" id="9606.ENSP00000271843"/>
<dbReference type="GlyCosmos" id="O76095">
    <property type="glycosylation" value="1 site, 1 glycan"/>
</dbReference>
<dbReference type="GlyGen" id="O76095">
    <property type="glycosylation" value="1 site, 1 O-linked glycan (1 site)"/>
</dbReference>
<dbReference type="iPTMnet" id="O76095"/>
<dbReference type="PhosphoSitePlus" id="O76095"/>
<dbReference type="BioMuta" id="JTB"/>
<dbReference type="jPOST" id="O76095"/>
<dbReference type="MassIVE" id="O76095"/>
<dbReference type="PaxDb" id="9606-ENSP00000271843"/>
<dbReference type="PeptideAtlas" id="O76095"/>
<dbReference type="ProteomicsDB" id="50413">
    <molecule id="O76095-1"/>
</dbReference>
<dbReference type="ProteomicsDB" id="50414">
    <molecule id="O76095-2"/>
</dbReference>
<dbReference type="Pumba" id="O76095"/>
<dbReference type="Antibodypedia" id="1668">
    <property type="antibodies" value="113 antibodies from 22 providers"/>
</dbReference>
<dbReference type="DNASU" id="10899"/>
<dbReference type="Ensembl" id="ENST00000271843.9">
    <molecule id="O76095-1"/>
    <property type="protein sequence ID" value="ENSP00000271843.4"/>
    <property type="gene ID" value="ENSG00000143543.15"/>
</dbReference>
<dbReference type="Ensembl" id="ENST00000356648.5">
    <molecule id="O76095-2"/>
    <property type="protein sequence ID" value="ENSP00000349069.1"/>
    <property type="gene ID" value="ENSG00000143543.15"/>
</dbReference>
<dbReference type="Ensembl" id="ENST00000368589.5">
    <molecule id="O76095-2"/>
    <property type="protein sequence ID" value="ENSP00000357578.1"/>
    <property type="gene ID" value="ENSG00000143543.15"/>
</dbReference>
<dbReference type="Ensembl" id="ENST00000428469.1">
    <molecule id="O76095-2"/>
    <property type="protein sequence ID" value="ENSP00000395250.1"/>
    <property type="gene ID" value="ENSG00000143543.15"/>
</dbReference>
<dbReference type="GeneID" id="10899"/>
<dbReference type="KEGG" id="hsa:10899"/>
<dbReference type="MANE-Select" id="ENST00000271843.9">
    <property type="protein sequence ID" value="ENSP00000271843.4"/>
    <property type="RefSeq nucleotide sequence ID" value="NM_006694.4"/>
    <property type="RefSeq protein sequence ID" value="NP_006685.1"/>
</dbReference>
<dbReference type="UCSC" id="uc001fds.4">
    <molecule id="O76095-1"/>
    <property type="organism name" value="human"/>
</dbReference>
<dbReference type="AGR" id="HGNC:6201"/>
<dbReference type="CTD" id="10899"/>
<dbReference type="DisGeNET" id="10899"/>
<dbReference type="GeneCards" id="JTB"/>
<dbReference type="HGNC" id="HGNC:6201">
    <property type="gene designation" value="JTB"/>
</dbReference>
<dbReference type="HPA" id="ENSG00000143543">
    <property type="expression patterns" value="Low tissue specificity"/>
</dbReference>
<dbReference type="MIM" id="604671">
    <property type="type" value="gene"/>
</dbReference>
<dbReference type="neXtProt" id="NX_O76095"/>
<dbReference type="OpenTargets" id="ENSG00000143543"/>
<dbReference type="PharmGKB" id="PA30003"/>
<dbReference type="VEuPathDB" id="HostDB:ENSG00000143543"/>
<dbReference type="eggNOG" id="KOG4084">
    <property type="taxonomic scope" value="Eukaryota"/>
</dbReference>
<dbReference type="GeneTree" id="ENSGT00390000016136"/>
<dbReference type="HOGENOM" id="CLU_130083_1_0_1"/>
<dbReference type="InParanoid" id="O76095"/>
<dbReference type="OMA" id="EECHPCS"/>
<dbReference type="OrthoDB" id="5971907at2759"/>
<dbReference type="PAN-GO" id="O76095">
    <property type="GO annotations" value="5 GO annotations based on evolutionary models"/>
</dbReference>
<dbReference type="PhylomeDB" id="O76095"/>
<dbReference type="TreeFam" id="TF316934"/>
<dbReference type="PathwayCommons" id="O76095"/>
<dbReference type="SignaLink" id="O76095"/>
<dbReference type="BioGRID-ORCS" id="10899">
    <property type="hits" value="96 hits in 1161 CRISPR screens"/>
</dbReference>
<dbReference type="CD-CODE" id="8C2F96ED">
    <property type="entry name" value="Centrosome"/>
</dbReference>
<dbReference type="ChiTaRS" id="JTB">
    <property type="organism name" value="human"/>
</dbReference>
<dbReference type="EvolutionaryTrace" id="O76095"/>
<dbReference type="GeneWiki" id="JTB_(gene)"/>
<dbReference type="GenomeRNAi" id="10899"/>
<dbReference type="Pharos" id="O76095">
    <property type="development level" value="Tbio"/>
</dbReference>
<dbReference type="PRO" id="PR:O76095"/>
<dbReference type="Proteomes" id="UP000005640">
    <property type="component" value="Chromosome 1"/>
</dbReference>
<dbReference type="RNAct" id="O76095">
    <property type="molecule type" value="protein"/>
</dbReference>
<dbReference type="Bgee" id="ENSG00000143543">
    <property type="expression patterns" value="Expressed in parotid gland and 204 other cell types or tissues"/>
</dbReference>
<dbReference type="GO" id="GO:0005813">
    <property type="term" value="C:centrosome"/>
    <property type="evidence" value="ECO:0007669"/>
    <property type="project" value="UniProtKB-SubCell"/>
</dbReference>
<dbReference type="GO" id="GO:0005737">
    <property type="term" value="C:cytoplasm"/>
    <property type="evidence" value="ECO:0000314"/>
    <property type="project" value="UniProtKB"/>
</dbReference>
<dbReference type="GO" id="GO:0016020">
    <property type="term" value="C:membrane"/>
    <property type="evidence" value="ECO:0000304"/>
    <property type="project" value="ProtInc"/>
</dbReference>
<dbReference type="GO" id="GO:0030496">
    <property type="term" value="C:midbody"/>
    <property type="evidence" value="ECO:0000314"/>
    <property type="project" value="UniProtKB"/>
</dbReference>
<dbReference type="GO" id="GO:0005739">
    <property type="term" value="C:mitochondrion"/>
    <property type="evidence" value="ECO:0007669"/>
    <property type="project" value="UniProtKB-SubCell"/>
</dbReference>
<dbReference type="GO" id="GO:0005886">
    <property type="term" value="C:plasma membrane"/>
    <property type="evidence" value="ECO:0000304"/>
    <property type="project" value="ProtInc"/>
</dbReference>
<dbReference type="GO" id="GO:0005819">
    <property type="term" value="C:spindle"/>
    <property type="evidence" value="ECO:0007669"/>
    <property type="project" value="UniProtKB-SubCell"/>
</dbReference>
<dbReference type="GO" id="GO:0019901">
    <property type="term" value="F:protein kinase binding"/>
    <property type="evidence" value="ECO:0000314"/>
    <property type="project" value="UniProtKB"/>
</dbReference>
<dbReference type="GO" id="GO:0008637">
    <property type="term" value="P:apoptotic mitochondrial changes"/>
    <property type="evidence" value="ECO:0007669"/>
    <property type="project" value="Ensembl"/>
</dbReference>
<dbReference type="GO" id="GO:0000278">
    <property type="term" value="P:mitotic cell cycle"/>
    <property type="evidence" value="ECO:0000315"/>
    <property type="project" value="UniProtKB"/>
</dbReference>
<dbReference type="GO" id="GO:0000281">
    <property type="term" value="P:mitotic cytokinesis"/>
    <property type="evidence" value="ECO:0000315"/>
    <property type="project" value="UniProtKB"/>
</dbReference>
<dbReference type="GO" id="GO:0045860">
    <property type="term" value="P:positive regulation of protein kinase activity"/>
    <property type="evidence" value="ECO:0000315"/>
    <property type="project" value="UniProtKB"/>
</dbReference>
<dbReference type="GO" id="GO:0042127">
    <property type="term" value="P:regulation of cell population proliferation"/>
    <property type="evidence" value="ECO:0007669"/>
    <property type="project" value="Ensembl"/>
</dbReference>
<dbReference type="FunFam" id="3.30.720.220:FF:000001">
    <property type="entry name" value="Jumping translocation breakpoint"/>
    <property type="match status" value="1"/>
</dbReference>
<dbReference type="Gene3D" id="3.30.720.220">
    <property type="match status" value="1"/>
</dbReference>
<dbReference type="InterPro" id="IPR008657">
    <property type="entry name" value="JTB"/>
</dbReference>
<dbReference type="PANTHER" id="PTHR13041">
    <property type="entry name" value="JTB PROTEIN-RELATED"/>
    <property type="match status" value="1"/>
</dbReference>
<dbReference type="PANTHER" id="PTHR13041:SF3">
    <property type="entry name" value="PROTEIN JTB"/>
    <property type="match status" value="1"/>
</dbReference>
<dbReference type="Pfam" id="PF05439">
    <property type="entry name" value="JTB"/>
    <property type="match status" value="1"/>
</dbReference>
<feature type="signal peptide" evidence="2">
    <location>
        <begin position="1"/>
        <end position="30"/>
    </location>
</feature>
<feature type="chain" id="PRO_0000021535" description="Protein JTB">
    <location>
        <begin position="31"/>
        <end position="146"/>
    </location>
</feature>
<feature type="topological domain" description="Extracellular" evidence="2">
    <location>
        <begin position="31"/>
        <end position="105"/>
    </location>
</feature>
<feature type="transmembrane region" description="Helical" evidence="2">
    <location>
        <begin position="106"/>
        <end position="126"/>
    </location>
</feature>
<feature type="topological domain" description="Cytoplasmic" evidence="2">
    <location>
        <begin position="127"/>
        <end position="146"/>
    </location>
</feature>
<feature type="splice variant" id="VSP_041400" description="In isoform 2." evidence="7 8">
    <original>MLAGAGRPGLPQGRHLCWLLCAFTLKLCQAEAPVQEEK</original>
    <variation>MAWGWHLSF</variation>
    <location>
        <begin position="1"/>
        <end position="38"/>
    </location>
</feature>
<feature type="sequence variant" id="VAR_033994" description="In dbSNP:rs34686244.">
    <original>L</original>
    <variation>F</variation>
    <location>
        <position position="16"/>
    </location>
</feature>
<feature type="turn" evidence="10">
    <location>
        <begin position="49"/>
        <end position="51"/>
    </location>
</feature>
<feature type="strand" evidence="10">
    <location>
        <begin position="54"/>
        <end position="62"/>
    </location>
</feature>
<feature type="helix" evidence="10">
    <location>
        <begin position="65"/>
        <end position="70"/>
    </location>
</feature>
<feature type="helix" evidence="10">
    <location>
        <begin position="72"/>
        <end position="74"/>
    </location>
</feature>
<feature type="turn" evidence="10">
    <location>
        <begin position="75"/>
        <end position="77"/>
    </location>
</feature>
<feature type="strand" evidence="10">
    <location>
        <begin position="79"/>
        <end position="85"/>
    </location>
</feature>
<feature type="turn" evidence="10">
    <location>
        <begin position="86"/>
        <end position="89"/>
    </location>
</feature>
<feature type="strand" evidence="10">
    <location>
        <begin position="90"/>
        <end position="95"/>
    </location>
</feature>
<feature type="helix" evidence="10">
    <location>
        <begin position="98"/>
        <end position="101"/>
    </location>
</feature>
<reference key="1">
    <citation type="journal article" date="1999" name="Oncogene">
        <title>JTB: a novel membrane protein gene at 1q21 rearranged in a jumping translocation.</title>
        <authorList>
            <person name="Hatakeyama S."/>
            <person name="Osawa M."/>
            <person name="Omine M."/>
            <person name="Ishikawa F."/>
        </authorList>
    </citation>
    <scope>NUCLEOTIDE SEQUENCE [GENOMIC DNA / MRNA] (ISOFORM 1)</scope>
    <scope>SUBCELLULAR LOCATION</scope>
    <scope>TISSUE SPECIFICITY</scope>
</reference>
<reference key="2">
    <citation type="journal article" date="2000" name="Int. J. Oncol.">
        <title>PAR, a novel androgen regulated gene, ubiquitously expressed in normal and malignant cells.</title>
        <authorList>
            <person name="Platica O."/>
            <person name="Chen S."/>
            <person name="Ivan E."/>
            <person name="Lopingco M.C."/>
            <person name="Holland J.F."/>
            <person name="Platica M."/>
        </authorList>
    </citation>
    <scope>NUCLEOTIDE SEQUENCE [MRNA] (ISOFORM 1)</scope>
    <scope>TISSUE SPECIFICITY</scope>
    <source>
        <tissue>Mammary cancer</tissue>
        <tissue>Prostatic carcinoma</tissue>
    </source>
</reference>
<reference key="3">
    <citation type="submission" date="1999-02" db="EMBL/GenBank/DDBJ databases">
        <authorList>
            <person name="Mei G."/>
            <person name="Yu W."/>
            <person name="Gibbs R.A."/>
        </authorList>
    </citation>
    <scope>NUCLEOTIDE SEQUENCE [LARGE SCALE MRNA] (ISOFORM 1)</scope>
    <source>
        <tissue>Brain</tissue>
    </source>
</reference>
<reference key="4">
    <citation type="journal article" date="2000" name="Genome Res.">
        <title>Cloning and functional analysis of cDNAs with open reading frames for 300 previously undefined genes expressed in CD34+ hematopoietic stem/progenitor cells.</title>
        <authorList>
            <person name="Zhang Q.-H."/>
            <person name="Ye M."/>
            <person name="Wu X.-Y."/>
            <person name="Ren S.-X."/>
            <person name="Zhao M."/>
            <person name="Zhao C.-J."/>
            <person name="Fu G."/>
            <person name="Shen Y."/>
            <person name="Fan H.-Y."/>
            <person name="Lu G."/>
            <person name="Zhong M."/>
            <person name="Xu X.-R."/>
            <person name="Han Z.-G."/>
            <person name="Zhang J.-W."/>
            <person name="Tao J."/>
            <person name="Huang Q.-H."/>
            <person name="Zhou J."/>
            <person name="Hu G.-X."/>
            <person name="Gu J."/>
            <person name="Chen S.-J."/>
            <person name="Chen Z."/>
        </authorList>
    </citation>
    <scope>NUCLEOTIDE SEQUENCE [LARGE SCALE MRNA] (ISOFORM 2)</scope>
    <source>
        <tissue>Umbilical cord blood</tissue>
    </source>
</reference>
<reference key="5">
    <citation type="submission" date="2003-05" db="EMBL/GenBank/DDBJ databases">
        <title>Cloning of human full-length CDSs in BD Creator(TM) system donor vector.</title>
        <authorList>
            <person name="Kalnine N."/>
            <person name="Chen X."/>
            <person name="Rolfs A."/>
            <person name="Halleck A."/>
            <person name="Hines L."/>
            <person name="Eisenstein S."/>
            <person name="Koundinya M."/>
            <person name="Raphael J."/>
            <person name="Moreira D."/>
            <person name="Kelley T."/>
            <person name="LaBaer J."/>
            <person name="Lin Y."/>
            <person name="Phelan M."/>
            <person name="Farmer A."/>
        </authorList>
    </citation>
    <scope>NUCLEOTIDE SEQUENCE [LARGE SCALE MRNA] (ISOFORM 1)</scope>
</reference>
<reference key="6">
    <citation type="submission" date="2004-06" db="EMBL/GenBank/DDBJ databases">
        <title>Cloning of human full open reading frames in Gateway(TM) system entry vector (pDONR201).</title>
        <authorList>
            <person name="Ebert L."/>
            <person name="Schick M."/>
            <person name="Neubert P."/>
            <person name="Schatten R."/>
            <person name="Henze S."/>
            <person name="Korn B."/>
        </authorList>
    </citation>
    <scope>NUCLEOTIDE SEQUENCE [LARGE SCALE MRNA] (ISOFORM 1)</scope>
</reference>
<reference key="7">
    <citation type="journal article" date="2004" name="Nat. Genet.">
        <title>Complete sequencing and characterization of 21,243 full-length human cDNAs.</title>
        <authorList>
            <person name="Ota T."/>
            <person name="Suzuki Y."/>
            <person name="Nishikawa T."/>
            <person name="Otsuki T."/>
            <person name="Sugiyama T."/>
            <person name="Irie R."/>
            <person name="Wakamatsu A."/>
            <person name="Hayashi K."/>
            <person name="Sato H."/>
            <person name="Nagai K."/>
            <person name="Kimura K."/>
            <person name="Makita H."/>
            <person name="Sekine M."/>
            <person name="Obayashi M."/>
            <person name="Nishi T."/>
            <person name="Shibahara T."/>
            <person name="Tanaka T."/>
            <person name="Ishii S."/>
            <person name="Yamamoto J."/>
            <person name="Saito K."/>
            <person name="Kawai Y."/>
            <person name="Isono Y."/>
            <person name="Nakamura Y."/>
            <person name="Nagahari K."/>
            <person name="Murakami K."/>
            <person name="Yasuda T."/>
            <person name="Iwayanagi T."/>
            <person name="Wagatsuma M."/>
            <person name="Shiratori A."/>
            <person name="Sudo H."/>
            <person name="Hosoiri T."/>
            <person name="Kaku Y."/>
            <person name="Kodaira H."/>
            <person name="Kondo H."/>
            <person name="Sugawara M."/>
            <person name="Takahashi M."/>
            <person name="Kanda K."/>
            <person name="Yokoi T."/>
            <person name="Furuya T."/>
            <person name="Kikkawa E."/>
            <person name="Omura Y."/>
            <person name="Abe K."/>
            <person name="Kamihara K."/>
            <person name="Katsuta N."/>
            <person name="Sato K."/>
            <person name="Tanikawa M."/>
            <person name="Yamazaki M."/>
            <person name="Ninomiya K."/>
            <person name="Ishibashi T."/>
            <person name="Yamashita H."/>
            <person name="Murakawa K."/>
            <person name="Fujimori K."/>
            <person name="Tanai H."/>
            <person name="Kimata M."/>
            <person name="Watanabe M."/>
            <person name="Hiraoka S."/>
            <person name="Chiba Y."/>
            <person name="Ishida S."/>
            <person name="Ono Y."/>
            <person name="Takiguchi S."/>
            <person name="Watanabe S."/>
            <person name="Yosida M."/>
            <person name="Hotuta T."/>
            <person name="Kusano J."/>
            <person name="Kanehori K."/>
            <person name="Takahashi-Fujii A."/>
            <person name="Hara H."/>
            <person name="Tanase T.-O."/>
            <person name="Nomura Y."/>
            <person name="Togiya S."/>
            <person name="Komai F."/>
            <person name="Hara R."/>
            <person name="Takeuchi K."/>
            <person name="Arita M."/>
            <person name="Imose N."/>
            <person name="Musashino K."/>
            <person name="Yuuki H."/>
            <person name="Oshima A."/>
            <person name="Sasaki N."/>
            <person name="Aotsuka S."/>
            <person name="Yoshikawa Y."/>
            <person name="Matsunawa H."/>
            <person name="Ichihara T."/>
            <person name="Shiohata N."/>
            <person name="Sano S."/>
            <person name="Moriya S."/>
            <person name="Momiyama H."/>
            <person name="Satoh N."/>
            <person name="Takami S."/>
            <person name="Terashima Y."/>
            <person name="Suzuki O."/>
            <person name="Nakagawa S."/>
            <person name="Senoh A."/>
            <person name="Mizoguchi H."/>
            <person name="Goto Y."/>
            <person name="Shimizu F."/>
            <person name="Wakebe H."/>
            <person name="Hishigaki H."/>
            <person name="Watanabe T."/>
            <person name="Sugiyama A."/>
            <person name="Takemoto M."/>
            <person name="Kawakami B."/>
            <person name="Yamazaki M."/>
            <person name="Watanabe K."/>
            <person name="Kumagai A."/>
            <person name="Itakura S."/>
            <person name="Fukuzumi Y."/>
            <person name="Fujimori Y."/>
            <person name="Komiyama M."/>
            <person name="Tashiro H."/>
            <person name="Tanigami A."/>
            <person name="Fujiwara T."/>
            <person name="Ono T."/>
            <person name="Yamada K."/>
            <person name="Fujii Y."/>
            <person name="Ozaki K."/>
            <person name="Hirao M."/>
            <person name="Ohmori Y."/>
            <person name="Kawabata A."/>
            <person name="Hikiji T."/>
            <person name="Kobatake N."/>
            <person name="Inagaki H."/>
            <person name="Ikema Y."/>
            <person name="Okamoto S."/>
            <person name="Okitani R."/>
            <person name="Kawakami T."/>
            <person name="Noguchi S."/>
            <person name="Itoh T."/>
            <person name="Shigeta K."/>
            <person name="Senba T."/>
            <person name="Matsumura K."/>
            <person name="Nakajima Y."/>
            <person name="Mizuno T."/>
            <person name="Morinaga M."/>
            <person name="Sasaki M."/>
            <person name="Togashi T."/>
            <person name="Oyama M."/>
            <person name="Hata H."/>
            <person name="Watanabe M."/>
            <person name="Komatsu T."/>
            <person name="Mizushima-Sugano J."/>
            <person name="Satoh T."/>
            <person name="Shirai Y."/>
            <person name="Takahashi Y."/>
            <person name="Nakagawa K."/>
            <person name="Okumura K."/>
            <person name="Nagase T."/>
            <person name="Nomura N."/>
            <person name="Kikuchi H."/>
            <person name="Masuho Y."/>
            <person name="Yamashita R."/>
            <person name="Nakai K."/>
            <person name="Yada T."/>
            <person name="Nakamura Y."/>
            <person name="Ohara O."/>
            <person name="Isogai T."/>
            <person name="Sugano S."/>
        </authorList>
    </citation>
    <scope>NUCLEOTIDE SEQUENCE [LARGE SCALE MRNA] (ISOFORM 1)</scope>
    <source>
        <tissue>Tongue</tissue>
    </source>
</reference>
<reference key="8">
    <citation type="journal article" date="2006" name="Nature">
        <title>The DNA sequence and biological annotation of human chromosome 1.</title>
        <authorList>
            <person name="Gregory S.G."/>
            <person name="Barlow K.F."/>
            <person name="McLay K.E."/>
            <person name="Kaul R."/>
            <person name="Swarbreck D."/>
            <person name="Dunham A."/>
            <person name="Scott C.E."/>
            <person name="Howe K.L."/>
            <person name="Woodfine K."/>
            <person name="Spencer C.C.A."/>
            <person name="Jones M.C."/>
            <person name="Gillson C."/>
            <person name="Searle S."/>
            <person name="Zhou Y."/>
            <person name="Kokocinski F."/>
            <person name="McDonald L."/>
            <person name="Evans R."/>
            <person name="Phillips K."/>
            <person name="Atkinson A."/>
            <person name="Cooper R."/>
            <person name="Jones C."/>
            <person name="Hall R.E."/>
            <person name="Andrews T.D."/>
            <person name="Lloyd C."/>
            <person name="Ainscough R."/>
            <person name="Almeida J.P."/>
            <person name="Ambrose K.D."/>
            <person name="Anderson F."/>
            <person name="Andrew R.W."/>
            <person name="Ashwell R.I.S."/>
            <person name="Aubin K."/>
            <person name="Babbage A.K."/>
            <person name="Bagguley C.L."/>
            <person name="Bailey J."/>
            <person name="Beasley H."/>
            <person name="Bethel G."/>
            <person name="Bird C.P."/>
            <person name="Bray-Allen S."/>
            <person name="Brown J.Y."/>
            <person name="Brown A.J."/>
            <person name="Buckley D."/>
            <person name="Burton J."/>
            <person name="Bye J."/>
            <person name="Carder C."/>
            <person name="Chapman J.C."/>
            <person name="Clark S.Y."/>
            <person name="Clarke G."/>
            <person name="Clee C."/>
            <person name="Cobley V."/>
            <person name="Collier R.E."/>
            <person name="Corby N."/>
            <person name="Coville G.J."/>
            <person name="Davies J."/>
            <person name="Deadman R."/>
            <person name="Dunn M."/>
            <person name="Earthrowl M."/>
            <person name="Ellington A.G."/>
            <person name="Errington H."/>
            <person name="Frankish A."/>
            <person name="Frankland J."/>
            <person name="French L."/>
            <person name="Garner P."/>
            <person name="Garnett J."/>
            <person name="Gay L."/>
            <person name="Ghori M.R.J."/>
            <person name="Gibson R."/>
            <person name="Gilby L.M."/>
            <person name="Gillett W."/>
            <person name="Glithero R.J."/>
            <person name="Grafham D.V."/>
            <person name="Griffiths C."/>
            <person name="Griffiths-Jones S."/>
            <person name="Grocock R."/>
            <person name="Hammond S."/>
            <person name="Harrison E.S.I."/>
            <person name="Hart E."/>
            <person name="Haugen E."/>
            <person name="Heath P.D."/>
            <person name="Holmes S."/>
            <person name="Holt K."/>
            <person name="Howden P.J."/>
            <person name="Hunt A.R."/>
            <person name="Hunt S.E."/>
            <person name="Hunter G."/>
            <person name="Isherwood J."/>
            <person name="James R."/>
            <person name="Johnson C."/>
            <person name="Johnson D."/>
            <person name="Joy A."/>
            <person name="Kay M."/>
            <person name="Kershaw J.K."/>
            <person name="Kibukawa M."/>
            <person name="Kimberley A.M."/>
            <person name="King A."/>
            <person name="Knights A.J."/>
            <person name="Lad H."/>
            <person name="Laird G."/>
            <person name="Lawlor S."/>
            <person name="Leongamornlert D.A."/>
            <person name="Lloyd D.M."/>
            <person name="Loveland J."/>
            <person name="Lovell J."/>
            <person name="Lush M.J."/>
            <person name="Lyne R."/>
            <person name="Martin S."/>
            <person name="Mashreghi-Mohammadi M."/>
            <person name="Matthews L."/>
            <person name="Matthews N.S.W."/>
            <person name="McLaren S."/>
            <person name="Milne S."/>
            <person name="Mistry S."/>
            <person name="Moore M.J.F."/>
            <person name="Nickerson T."/>
            <person name="O'Dell C.N."/>
            <person name="Oliver K."/>
            <person name="Palmeiri A."/>
            <person name="Palmer S.A."/>
            <person name="Parker A."/>
            <person name="Patel D."/>
            <person name="Pearce A.V."/>
            <person name="Peck A.I."/>
            <person name="Pelan S."/>
            <person name="Phelps K."/>
            <person name="Phillimore B.J."/>
            <person name="Plumb R."/>
            <person name="Rajan J."/>
            <person name="Raymond C."/>
            <person name="Rouse G."/>
            <person name="Saenphimmachak C."/>
            <person name="Sehra H.K."/>
            <person name="Sheridan E."/>
            <person name="Shownkeen R."/>
            <person name="Sims S."/>
            <person name="Skuce C.D."/>
            <person name="Smith M."/>
            <person name="Steward C."/>
            <person name="Subramanian S."/>
            <person name="Sycamore N."/>
            <person name="Tracey A."/>
            <person name="Tromans A."/>
            <person name="Van Helmond Z."/>
            <person name="Wall M."/>
            <person name="Wallis J.M."/>
            <person name="White S."/>
            <person name="Whitehead S.L."/>
            <person name="Wilkinson J.E."/>
            <person name="Willey D.L."/>
            <person name="Williams H."/>
            <person name="Wilming L."/>
            <person name="Wray P.W."/>
            <person name="Wu Z."/>
            <person name="Coulson A."/>
            <person name="Vaudin M."/>
            <person name="Sulston J.E."/>
            <person name="Durbin R.M."/>
            <person name="Hubbard T."/>
            <person name="Wooster R."/>
            <person name="Dunham I."/>
            <person name="Carter N.P."/>
            <person name="McVean G."/>
            <person name="Ross M.T."/>
            <person name="Harrow J."/>
            <person name="Olson M.V."/>
            <person name="Beck S."/>
            <person name="Rogers J."/>
            <person name="Bentley D.R."/>
        </authorList>
    </citation>
    <scope>NUCLEOTIDE SEQUENCE [LARGE SCALE GENOMIC DNA]</scope>
</reference>
<reference key="9">
    <citation type="submission" date="2005-09" db="EMBL/GenBank/DDBJ databases">
        <authorList>
            <person name="Mural R.J."/>
            <person name="Istrail S."/>
            <person name="Sutton G.G."/>
            <person name="Florea L."/>
            <person name="Halpern A.L."/>
            <person name="Mobarry C.M."/>
            <person name="Lippert R."/>
            <person name="Walenz B."/>
            <person name="Shatkay H."/>
            <person name="Dew I."/>
            <person name="Miller J.R."/>
            <person name="Flanigan M.J."/>
            <person name="Edwards N.J."/>
            <person name="Bolanos R."/>
            <person name="Fasulo D."/>
            <person name="Halldorsson B.V."/>
            <person name="Hannenhalli S."/>
            <person name="Turner R."/>
            <person name="Yooseph S."/>
            <person name="Lu F."/>
            <person name="Nusskern D.R."/>
            <person name="Shue B.C."/>
            <person name="Zheng X.H."/>
            <person name="Zhong F."/>
            <person name="Delcher A.L."/>
            <person name="Huson D.H."/>
            <person name="Kravitz S.A."/>
            <person name="Mouchard L."/>
            <person name="Reinert K."/>
            <person name="Remington K.A."/>
            <person name="Clark A.G."/>
            <person name="Waterman M.S."/>
            <person name="Eichler E.E."/>
            <person name="Adams M.D."/>
            <person name="Hunkapiller M.W."/>
            <person name="Myers E.W."/>
            <person name="Venter J.C."/>
        </authorList>
    </citation>
    <scope>NUCLEOTIDE SEQUENCE [LARGE SCALE GENOMIC DNA]</scope>
</reference>
<reference key="10">
    <citation type="journal article" date="2004" name="Genome Res.">
        <title>The status, quality, and expansion of the NIH full-length cDNA project: the Mammalian Gene Collection (MGC).</title>
        <authorList>
            <consortium name="The MGC Project Team"/>
        </authorList>
    </citation>
    <scope>NUCLEOTIDE SEQUENCE [LARGE SCALE MRNA] (ISOFORMS 1 AND 2)</scope>
    <source>
        <tissue>Cervix</tissue>
        <tissue>Lung</tissue>
        <tissue>Skin</tissue>
        <tissue>Uterus</tissue>
    </source>
</reference>
<reference key="11">
    <citation type="journal article" date="2007" name="Oncogene">
        <title>Characterization of Jumping translocation breakpoint (JTB) gene product isolated as a TGF-beta1-inducible clone involved in regulation of mitochondrial function, cell growth and cell death.</title>
        <authorList>
            <person name="Kanome T."/>
            <person name="Itoh N."/>
            <person name="Ishikawa F."/>
            <person name="Mori K."/>
            <person name="Kim-Kaneyama J.R."/>
            <person name="Nose K."/>
            <person name="Shibanuma M."/>
        </authorList>
    </citation>
    <scope>TISSUE SPECIFICITY</scope>
</reference>
<reference key="12">
    <citation type="journal article" date="2011" name="Int. J. Oncol.">
        <title>PAR, a protein involved in the cell cycle, is functionally related to chromosomal passenger proteins.</title>
        <authorList>
            <person name="Platica M."/>
            <person name="Ionescu A."/>
            <person name="Ivan E."/>
            <person name="Holland J.F."/>
            <person name="Mandeli J."/>
            <person name="Platica O."/>
        </authorList>
    </citation>
    <scope>FUNCTION</scope>
    <scope>SUBCELLULAR LOCATION</scope>
    <scope>INTERACTION WITH AURKA; AURKB AND BIRC5</scope>
    <scope>SUBUNIT</scope>
    <scope>INDUCTION</scope>
    <scope>TISSUE SPECIFICITY</scope>
</reference>
<reference key="13">
    <citation type="journal article" date="2012" name="J. Mol. Biol.">
        <title>The structure of the extracellular domain of the jumping translocation breakpoint protein reveals a variation of the midkine fold.</title>
        <authorList>
            <person name="Rousseau F."/>
            <person name="Pan B."/>
            <person name="Fairbrother W.J."/>
            <person name="Bazan J.F."/>
            <person name="Lingel A."/>
        </authorList>
    </citation>
    <scope>STRUCTURE BY NMR OF 47-104</scope>
</reference>
<comment type="function">
    <text evidence="1 6">Required for normal cytokinesis during mitosis. Plays a role in the regulation of cell proliferation. May be a component of the chromosomal passenger complex (CPC), a complex that acts as a key regulator of mitosis. The CPC complex has essential functions at the centromere in ensuring correct chromosome alignment and segregation and is required for chromatin-induced microtubule stabilization and spindle assembly. Increases AURKB activity. Inhibits apoptosis induced by TGFB1 (By similarity). Overexpression induces swelling of mitochondria and reduces mitochondrial membrane potential (By similarity).</text>
</comment>
<comment type="subunit">
    <text evidence="6">Interacts with AURKA, AURKB, BIRC5 and INCENP. May be a component of the CPC at least composed of BIRC5/survivin, CDCA8/borealin, INCENP and AURKB/Aurora-B.</text>
</comment>
<comment type="subcellular location">
    <subcellularLocation>
        <location evidence="9">Membrane</location>
        <topology evidence="9">Single-pass type I membrane protein</topology>
    </subcellularLocation>
    <subcellularLocation>
        <location evidence="1">Mitochondrion</location>
    </subcellularLocation>
    <subcellularLocation>
        <location>Cytoplasm</location>
    </subcellularLocation>
    <subcellularLocation>
        <location>Cytoplasm</location>
        <location>Cytoskeleton</location>
        <location>Microtubule organizing center</location>
        <location>Centrosome</location>
    </subcellularLocation>
    <subcellularLocation>
        <location>Cytoplasm</location>
        <location>Cytoskeleton</location>
        <location>Spindle</location>
    </subcellularLocation>
    <text>Detected at the centrosome and along spindle fibers during prophase and metaphase. Detected at the midbody during telophase.</text>
</comment>
<comment type="alternative products">
    <event type="alternative splicing"/>
    <isoform>
        <id>O76095-1</id>
        <name>1</name>
        <sequence type="displayed"/>
    </isoform>
    <isoform>
        <id>O76095-2</id>
        <name>2</name>
        <sequence type="described" ref="VSP_041400"/>
    </isoform>
</comment>
<comment type="tissue specificity">
    <text evidence="3 4 5 6">Ubiquitous. Expressed in all normal human tissues studied but overexpressed or underexpressed in many of their malignant counterparts.</text>
</comment>
<comment type="induction">
    <text evidence="6">Protein levels increase during the S phase of the cell cycle, are highest during G2 and mitosis, and decrease to low levels at G1. Levels are lowest at the transition from G1 to S phase.</text>
</comment>
<comment type="similarity">
    <text evidence="9">Belongs to the JTB family.</text>
</comment>
<organism>
    <name type="scientific">Homo sapiens</name>
    <name type="common">Human</name>
    <dbReference type="NCBI Taxonomy" id="9606"/>
    <lineage>
        <taxon>Eukaryota</taxon>
        <taxon>Metazoa</taxon>
        <taxon>Chordata</taxon>
        <taxon>Craniata</taxon>
        <taxon>Vertebrata</taxon>
        <taxon>Euteleostomi</taxon>
        <taxon>Mammalia</taxon>
        <taxon>Eutheria</taxon>
        <taxon>Euarchontoglires</taxon>
        <taxon>Primates</taxon>
        <taxon>Haplorrhini</taxon>
        <taxon>Catarrhini</taxon>
        <taxon>Hominidae</taxon>
        <taxon>Homo</taxon>
    </lineage>
</organism>
<sequence>MLAGAGRPGLPQGRHLCWLLCAFTLKLCQAEAPVQEEKLSASTSNLPCWLVEEFVVAEECSPCSNFRAKTTPECGPTGYVEKITCSSSKRNEFKSCRSALMEQRLFWKFEGAVVCVALIFACLVIIRQRQLDRKALEKVRKQIESI</sequence>